<feature type="transit peptide" description="Mitochondrion" evidence="1">
    <location>
        <begin position="1"/>
        <end position="27"/>
    </location>
</feature>
<feature type="chain" id="PRO_0000020050" description="NADH dehydrogenase [ubiquinone] 1 subunit C1, mitochondrial">
    <location>
        <begin position="28"/>
        <end position="76"/>
    </location>
</feature>
<feature type="transmembrane region" description="Helical" evidence="2">
    <location>
        <begin position="40"/>
        <end position="59"/>
    </location>
</feature>
<feature type="strand" evidence="8">
    <location>
        <begin position="30"/>
        <end position="32"/>
    </location>
</feature>
<feature type="strand" evidence="6">
    <location>
        <begin position="35"/>
        <end position="38"/>
    </location>
</feature>
<feature type="helix" evidence="7">
    <location>
        <begin position="41"/>
        <end position="73"/>
    </location>
</feature>
<reference key="1">
    <citation type="journal article" date="2005" name="Science">
        <title>The transcriptional landscape of the mammalian genome.</title>
        <authorList>
            <person name="Carninci P."/>
            <person name="Kasukawa T."/>
            <person name="Katayama S."/>
            <person name="Gough J."/>
            <person name="Frith M.C."/>
            <person name="Maeda N."/>
            <person name="Oyama R."/>
            <person name="Ravasi T."/>
            <person name="Lenhard B."/>
            <person name="Wells C."/>
            <person name="Kodzius R."/>
            <person name="Shimokawa K."/>
            <person name="Bajic V.B."/>
            <person name="Brenner S.E."/>
            <person name="Batalov S."/>
            <person name="Forrest A.R."/>
            <person name="Zavolan M."/>
            <person name="Davis M.J."/>
            <person name="Wilming L.G."/>
            <person name="Aidinis V."/>
            <person name="Allen J.E."/>
            <person name="Ambesi-Impiombato A."/>
            <person name="Apweiler R."/>
            <person name="Aturaliya R.N."/>
            <person name="Bailey T.L."/>
            <person name="Bansal M."/>
            <person name="Baxter L."/>
            <person name="Beisel K.W."/>
            <person name="Bersano T."/>
            <person name="Bono H."/>
            <person name="Chalk A.M."/>
            <person name="Chiu K.P."/>
            <person name="Choudhary V."/>
            <person name="Christoffels A."/>
            <person name="Clutterbuck D.R."/>
            <person name="Crowe M.L."/>
            <person name="Dalla E."/>
            <person name="Dalrymple B.P."/>
            <person name="de Bono B."/>
            <person name="Della Gatta G."/>
            <person name="di Bernardo D."/>
            <person name="Down T."/>
            <person name="Engstrom P."/>
            <person name="Fagiolini M."/>
            <person name="Faulkner G."/>
            <person name="Fletcher C.F."/>
            <person name="Fukushima T."/>
            <person name="Furuno M."/>
            <person name="Futaki S."/>
            <person name="Gariboldi M."/>
            <person name="Georgii-Hemming P."/>
            <person name="Gingeras T.R."/>
            <person name="Gojobori T."/>
            <person name="Green R.E."/>
            <person name="Gustincich S."/>
            <person name="Harbers M."/>
            <person name="Hayashi Y."/>
            <person name="Hensch T.K."/>
            <person name="Hirokawa N."/>
            <person name="Hill D."/>
            <person name="Huminiecki L."/>
            <person name="Iacono M."/>
            <person name="Ikeo K."/>
            <person name="Iwama A."/>
            <person name="Ishikawa T."/>
            <person name="Jakt M."/>
            <person name="Kanapin A."/>
            <person name="Katoh M."/>
            <person name="Kawasawa Y."/>
            <person name="Kelso J."/>
            <person name="Kitamura H."/>
            <person name="Kitano H."/>
            <person name="Kollias G."/>
            <person name="Krishnan S.P."/>
            <person name="Kruger A."/>
            <person name="Kummerfeld S.K."/>
            <person name="Kurochkin I.V."/>
            <person name="Lareau L.F."/>
            <person name="Lazarevic D."/>
            <person name="Lipovich L."/>
            <person name="Liu J."/>
            <person name="Liuni S."/>
            <person name="McWilliam S."/>
            <person name="Madan Babu M."/>
            <person name="Madera M."/>
            <person name="Marchionni L."/>
            <person name="Matsuda H."/>
            <person name="Matsuzawa S."/>
            <person name="Miki H."/>
            <person name="Mignone F."/>
            <person name="Miyake S."/>
            <person name="Morris K."/>
            <person name="Mottagui-Tabar S."/>
            <person name="Mulder N."/>
            <person name="Nakano N."/>
            <person name="Nakauchi H."/>
            <person name="Ng P."/>
            <person name="Nilsson R."/>
            <person name="Nishiguchi S."/>
            <person name="Nishikawa S."/>
            <person name="Nori F."/>
            <person name="Ohara O."/>
            <person name="Okazaki Y."/>
            <person name="Orlando V."/>
            <person name="Pang K.C."/>
            <person name="Pavan W.J."/>
            <person name="Pavesi G."/>
            <person name="Pesole G."/>
            <person name="Petrovsky N."/>
            <person name="Piazza S."/>
            <person name="Reed J."/>
            <person name="Reid J.F."/>
            <person name="Ring B.Z."/>
            <person name="Ringwald M."/>
            <person name="Rost B."/>
            <person name="Ruan Y."/>
            <person name="Salzberg S.L."/>
            <person name="Sandelin A."/>
            <person name="Schneider C."/>
            <person name="Schoenbach C."/>
            <person name="Sekiguchi K."/>
            <person name="Semple C.A."/>
            <person name="Seno S."/>
            <person name="Sessa L."/>
            <person name="Sheng Y."/>
            <person name="Shibata Y."/>
            <person name="Shimada H."/>
            <person name="Shimada K."/>
            <person name="Silva D."/>
            <person name="Sinclair B."/>
            <person name="Sperling S."/>
            <person name="Stupka E."/>
            <person name="Sugiura K."/>
            <person name="Sultana R."/>
            <person name="Takenaka Y."/>
            <person name="Taki K."/>
            <person name="Tammoja K."/>
            <person name="Tan S.L."/>
            <person name="Tang S."/>
            <person name="Taylor M.S."/>
            <person name="Tegner J."/>
            <person name="Teichmann S.A."/>
            <person name="Ueda H.R."/>
            <person name="van Nimwegen E."/>
            <person name="Verardo R."/>
            <person name="Wei C.L."/>
            <person name="Yagi K."/>
            <person name="Yamanishi H."/>
            <person name="Zabarovsky E."/>
            <person name="Zhu S."/>
            <person name="Zimmer A."/>
            <person name="Hide W."/>
            <person name="Bult C."/>
            <person name="Grimmond S.M."/>
            <person name="Teasdale R.D."/>
            <person name="Liu E.T."/>
            <person name="Brusic V."/>
            <person name="Quackenbush J."/>
            <person name="Wahlestedt C."/>
            <person name="Mattick J.S."/>
            <person name="Hume D.A."/>
            <person name="Kai C."/>
            <person name="Sasaki D."/>
            <person name="Tomaru Y."/>
            <person name="Fukuda S."/>
            <person name="Kanamori-Katayama M."/>
            <person name="Suzuki M."/>
            <person name="Aoki J."/>
            <person name="Arakawa T."/>
            <person name="Iida J."/>
            <person name="Imamura K."/>
            <person name="Itoh M."/>
            <person name="Kato T."/>
            <person name="Kawaji H."/>
            <person name="Kawagashira N."/>
            <person name="Kawashima T."/>
            <person name="Kojima M."/>
            <person name="Kondo S."/>
            <person name="Konno H."/>
            <person name="Nakano K."/>
            <person name="Ninomiya N."/>
            <person name="Nishio T."/>
            <person name="Okada M."/>
            <person name="Plessy C."/>
            <person name="Shibata K."/>
            <person name="Shiraki T."/>
            <person name="Suzuki S."/>
            <person name="Tagami M."/>
            <person name="Waki K."/>
            <person name="Watahiki A."/>
            <person name="Okamura-Oho Y."/>
            <person name="Suzuki H."/>
            <person name="Kawai J."/>
            <person name="Hayashizaki Y."/>
        </authorList>
    </citation>
    <scope>NUCLEOTIDE SEQUENCE [LARGE SCALE MRNA]</scope>
    <source>
        <strain>C57BL/6J</strain>
        <tissue>Embryo</tissue>
        <tissue>Kidney</tissue>
        <tissue>Tongue</tissue>
    </source>
</reference>
<reference key="2">
    <citation type="journal article" date="2004" name="Genome Res.">
        <title>The status, quality, and expansion of the NIH full-length cDNA project: the Mammalian Gene Collection (MGC).</title>
        <authorList>
            <consortium name="The MGC Project Team"/>
        </authorList>
    </citation>
    <scope>NUCLEOTIDE SEQUENCE [LARGE SCALE MRNA]</scope>
    <source>
        <strain>C57BL/6J</strain>
        <tissue>Brain</tissue>
    </source>
</reference>
<reference evidence="5" key="3">
    <citation type="journal article" date="2024" name="Nat. Struct. Mol. Biol.">
        <title>SCAF1 drives the compositional diversity of mammalian respirasomes.</title>
        <authorList>
            <person name="Vercellino I."/>
            <person name="Sazanov L.A."/>
        </authorList>
    </citation>
    <scope>STRUCTURE BY ELECTRON MICROSCOPY (3.60 ANGSTROMS) IN COMPLEX WITH MITOCHONDRIAL RESPIRATORY SUPERCOMPLEX</scope>
    <scope>FUNCTION</scope>
    <scope>SUBCELLULAR LOCATION</scope>
    <scope>SUBUNIT</scope>
</reference>
<sequence>MAPSVVLRSFSRLLAPARLPSCSSTRSKFYVREPVNAKPNWLAVGLSVGASVFMWIYLIQTHNEDVLEYKRRNGLE</sequence>
<gene>
    <name type="primary">Ndufc1</name>
</gene>
<accession>Q9CQY9</accession>
<accession>Q58DY9</accession>
<proteinExistence type="evidence at protein level"/>
<keyword id="KW-0002">3D-structure</keyword>
<keyword id="KW-0249">Electron transport</keyword>
<keyword id="KW-0472">Membrane</keyword>
<keyword id="KW-0496">Mitochondrion</keyword>
<keyword id="KW-0999">Mitochondrion inner membrane</keyword>
<keyword id="KW-1185">Reference proteome</keyword>
<keyword id="KW-0679">Respiratory chain</keyword>
<keyword id="KW-0809">Transit peptide</keyword>
<keyword id="KW-0812">Transmembrane</keyword>
<keyword id="KW-1133">Transmembrane helix</keyword>
<keyword id="KW-0813">Transport</keyword>
<protein>
    <recommendedName>
        <fullName>NADH dehydrogenase [ubiquinone] 1 subunit C1, mitochondrial</fullName>
    </recommendedName>
    <alternativeName>
        <fullName>Complex I-KFYI</fullName>
        <shortName>CI-KFYI</shortName>
    </alternativeName>
    <alternativeName>
        <fullName>NADH-ubiquinone oxidoreductase KFYI subunit</fullName>
    </alternativeName>
</protein>
<comment type="function">
    <text evidence="3">Accessory subunit of the mitochondrial membrane respiratory chain NADH dehydrogenase (Complex I), that is believed not to be involved in catalysis. Complex I functions in the transfer of electrons from NADH to the respiratory chain. The immediate electron acceptor for the enzyme is believed to be ubiquinone.</text>
</comment>
<comment type="subunit">
    <text evidence="3">Complex I is composed of 45 different subunits.</text>
</comment>
<comment type="subcellular location">
    <subcellularLocation>
        <location evidence="3">Mitochondrion inner membrane</location>
        <topology evidence="2">Single-pass membrane protein</topology>
        <orientation evidence="3">Matrix side</orientation>
    </subcellularLocation>
</comment>
<comment type="similarity">
    <text evidence="4">Belongs to the complex I NDUFC1 subunit family.</text>
</comment>
<name>NDUC1_MOUSE</name>
<dbReference type="EMBL" id="AK003365">
    <property type="protein sequence ID" value="BAB22739.1"/>
    <property type="molecule type" value="mRNA"/>
</dbReference>
<dbReference type="EMBL" id="AK009393">
    <property type="protein sequence ID" value="BAB26262.1"/>
    <property type="molecule type" value="mRNA"/>
</dbReference>
<dbReference type="EMBL" id="AK018705">
    <property type="protein sequence ID" value="BAB31356.1"/>
    <property type="molecule type" value="mRNA"/>
</dbReference>
<dbReference type="EMBL" id="AK028011">
    <property type="protein sequence ID" value="BAC25698.1"/>
    <property type="molecule type" value="mRNA"/>
</dbReference>
<dbReference type="EMBL" id="BC092141">
    <property type="protein sequence ID" value="AAH92141.1"/>
    <property type="molecule type" value="mRNA"/>
</dbReference>
<dbReference type="CCDS" id="CCDS38426.1"/>
<dbReference type="RefSeq" id="NP_079799.1">
    <property type="nucleotide sequence ID" value="NM_025523.2"/>
</dbReference>
<dbReference type="RefSeq" id="XP_036019119.1">
    <property type="nucleotide sequence ID" value="XM_036163226.1"/>
</dbReference>
<dbReference type="PDB" id="6G2J">
    <property type="method" value="EM"/>
    <property type="resolution" value="3.30 A"/>
    <property type="chains" value="c=1-76"/>
</dbReference>
<dbReference type="PDB" id="6G72">
    <property type="method" value="EM"/>
    <property type="resolution" value="3.90 A"/>
    <property type="chains" value="c=1-76"/>
</dbReference>
<dbReference type="PDB" id="6ZR2">
    <property type="method" value="EM"/>
    <property type="resolution" value="3.10 A"/>
    <property type="chains" value="c=1-76"/>
</dbReference>
<dbReference type="PDB" id="6ZTQ">
    <property type="method" value="EM"/>
    <property type="resolution" value="3.00 A"/>
    <property type="chains" value="c=1-76"/>
</dbReference>
<dbReference type="PDB" id="7AK5">
    <property type="method" value="EM"/>
    <property type="resolution" value="3.17 A"/>
    <property type="chains" value="c=1-76"/>
</dbReference>
<dbReference type="PDB" id="7AK6">
    <property type="method" value="EM"/>
    <property type="resolution" value="3.82 A"/>
    <property type="chains" value="c=1-76"/>
</dbReference>
<dbReference type="PDB" id="7B93">
    <property type="method" value="EM"/>
    <property type="resolution" value="3.04 A"/>
    <property type="chains" value="c=1-76"/>
</dbReference>
<dbReference type="PDB" id="7PSA">
    <property type="method" value="EM"/>
    <property type="resolution" value="3.40 A"/>
    <property type="chains" value="c=1-76"/>
</dbReference>
<dbReference type="PDB" id="8C2S">
    <property type="method" value="EM"/>
    <property type="resolution" value="3.90 A"/>
    <property type="chains" value="c=1-76"/>
</dbReference>
<dbReference type="PDB" id="8CA3">
    <property type="method" value="EM"/>
    <property type="resolution" value="3.20 A"/>
    <property type="chains" value="c=1-76"/>
</dbReference>
<dbReference type="PDB" id="8CA5">
    <property type="method" value="EM"/>
    <property type="resolution" value="3.90 A"/>
    <property type="chains" value="c=1-76"/>
</dbReference>
<dbReference type="PDB" id="8IAO">
    <property type="method" value="EM"/>
    <property type="resolution" value="4.20 A"/>
    <property type="chains" value="c=1-76"/>
</dbReference>
<dbReference type="PDB" id="8IAQ">
    <property type="method" value="EM"/>
    <property type="resolution" value="3.40 A"/>
    <property type="chains" value="c=1-76"/>
</dbReference>
<dbReference type="PDB" id="8IB4">
    <property type="method" value="EM"/>
    <property type="resolution" value="4.30 A"/>
    <property type="chains" value="c=1-76"/>
</dbReference>
<dbReference type="PDB" id="8IB6">
    <property type="method" value="EM"/>
    <property type="resolution" value="3.30 A"/>
    <property type="chains" value="c=1-76"/>
</dbReference>
<dbReference type="PDB" id="8IB9">
    <property type="method" value="EM"/>
    <property type="resolution" value="4.30 A"/>
    <property type="chains" value="c=1-76"/>
</dbReference>
<dbReference type="PDB" id="8IBB">
    <property type="method" value="EM"/>
    <property type="resolution" value="3.30 A"/>
    <property type="chains" value="c=1-76"/>
</dbReference>
<dbReference type="PDB" id="8IBD">
    <property type="method" value="EM"/>
    <property type="resolution" value="4.20 A"/>
    <property type="chains" value="c=1-76"/>
</dbReference>
<dbReference type="PDB" id="8IBF">
    <property type="method" value="EM"/>
    <property type="resolution" value="3.30 A"/>
    <property type="chains" value="c=1-76"/>
</dbReference>
<dbReference type="PDB" id="8IC2">
    <property type="method" value="EM"/>
    <property type="resolution" value="6.30 A"/>
    <property type="chains" value="c=1-76"/>
</dbReference>
<dbReference type="PDB" id="8IC4">
    <property type="method" value="EM"/>
    <property type="resolution" value="3.20 A"/>
    <property type="chains" value="c=1-76"/>
</dbReference>
<dbReference type="PDB" id="8OLT">
    <property type="method" value="EM"/>
    <property type="resolution" value="2.84 A"/>
    <property type="chains" value="c=1-76"/>
</dbReference>
<dbReference type="PDB" id="8OM1">
    <property type="method" value="EM"/>
    <property type="resolution" value="2.39 A"/>
    <property type="chains" value="c=1-76"/>
</dbReference>
<dbReference type="PDB" id="8PW5">
    <property type="method" value="EM"/>
    <property type="resolution" value="3.60 A"/>
    <property type="chains" value="c1=1-76"/>
</dbReference>
<dbReference type="PDB" id="8PW6">
    <property type="method" value="EM"/>
    <property type="resolution" value="3.30 A"/>
    <property type="chains" value="c1=1-76"/>
</dbReference>
<dbReference type="PDB" id="8PW7">
    <property type="method" value="EM"/>
    <property type="resolution" value="3.50 A"/>
    <property type="chains" value="c1=1-76"/>
</dbReference>
<dbReference type="PDB" id="8RGP">
    <property type="method" value="EM"/>
    <property type="resolution" value="3.00 A"/>
    <property type="chains" value="c=1-76"/>
</dbReference>
<dbReference type="PDB" id="8RGQ">
    <property type="method" value="EM"/>
    <property type="resolution" value="3.00 A"/>
    <property type="chains" value="c=1-76"/>
</dbReference>
<dbReference type="PDB" id="8RGR">
    <property type="method" value="EM"/>
    <property type="resolution" value="2.90 A"/>
    <property type="chains" value="c=1-76"/>
</dbReference>
<dbReference type="PDB" id="8RGT">
    <property type="method" value="EM"/>
    <property type="resolution" value="3.10 A"/>
    <property type="chains" value="c=1-76"/>
</dbReference>
<dbReference type="PDB" id="8UCA">
    <property type="method" value="EM"/>
    <property type="resolution" value="3.70 A"/>
    <property type="chains" value="C1/c1=1-76"/>
</dbReference>
<dbReference type="PDBsum" id="6G2J"/>
<dbReference type="PDBsum" id="6G72"/>
<dbReference type="PDBsum" id="6ZR2"/>
<dbReference type="PDBsum" id="6ZTQ"/>
<dbReference type="PDBsum" id="7AK5"/>
<dbReference type="PDBsum" id="7AK6"/>
<dbReference type="PDBsum" id="7B93"/>
<dbReference type="PDBsum" id="7PSA"/>
<dbReference type="PDBsum" id="8C2S"/>
<dbReference type="PDBsum" id="8CA3"/>
<dbReference type="PDBsum" id="8CA5"/>
<dbReference type="PDBsum" id="8IAO"/>
<dbReference type="PDBsum" id="8IAQ"/>
<dbReference type="PDBsum" id="8IB4"/>
<dbReference type="PDBsum" id="8IB6"/>
<dbReference type="PDBsum" id="8IB9"/>
<dbReference type="PDBsum" id="8IBB"/>
<dbReference type="PDBsum" id="8IBD"/>
<dbReference type="PDBsum" id="8IBF"/>
<dbReference type="PDBsum" id="8IC2"/>
<dbReference type="PDBsum" id="8IC4"/>
<dbReference type="PDBsum" id="8OLT"/>
<dbReference type="PDBsum" id="8OM1"/>
<dbReference type="PDBsum" id="8PW5"/>
<dbReference type="PDBsum" id="8PW6"/>
<dbReference type="PDBsum" id="8PW7"/>
<dbReference type="PDBsum" id="8RGP"/>
<dbReference type="PDBsum" id="8RGQ"/>
<dbReference type="PDBsum" id="8RGR"/>
<dbReference type="PDBsum" id="8RGT"/>
<dbReference type="PDBsum" id="8UCA"/>
<dbReference type="EMDB" id="EMD-11377"/>
<dbReference type="EMDB" id="EMD-11424"/>
<dbReference type="EMDB" id="EMD-11810"/>
<dbReference type="EMDB" id="EMD-11811"/>
<dbReference type="EMDB" id="EMD-12095"/>
<dbReference type="EMDB" id="EMD-13611"/>
<dbReference type="EMDB" id="EMD-16398"/>
<dbReference type="EMDB" id="EMD-16516"/>
<dbReference type="EMDB" id="EMD-16518"/>
<dbReference type="EMDB" id="EMD-16962"/>
<dbReference type="EMDB" id="EMD-16965"/>
<dbReference type="EMDB" id="EMD-17989"/>
<dbReference type="EMDB" id="EMD-17990"/>
<dbReference type="EMDB" id="EMD-17991"/>
<dbReference type="EMDB" id="EMD-19145"/>
<dbReference type="EMDB" id="EMD-19146"/>
<dbReference type="EMDB" id="EMD-19147"/>
<dbReference type="EMDB" id="EMD-19148"/>
<dbReference type="EMDB" id="EMD-35313"/>
<dbReference type="EMDB" id="EMD-35315"/>
<dbReference type="EMDB" id="EMD-35331"/>
<dbReference type="EMDB" id="EMD-35333"/>
<dbReference type="EMDB" id="EMD-35336"/>
<dbReference type="EMDB" id="EMD-35338"/>
<dbReference type="EMDB" id="EMD-35340"/>
<dbReference type="EMDB" id="EMD-35342"/>
<dbReference type="EMDB" id="EMD-35352"/>
<dbReference type="EMDB" id="EMD-35354"/>
<dbReference type="EMDB" id="EMD-42122"/>
<dbReference type="EMDB" id="EMD-4345"/>
<dbReference type="EMDB" id="EMD-4356"/>
<dbReference type="SMR" id="Q9CQY9"/>
<dbReference type="ComplexPortal" id="CPX-266">
    <property type="entry name" value="Mitochondrial respiratory chain complex I"/>
</dbReference>
<dbReference type="FunCoup" id="Q9CQY9">
    <property type="interactions" value="404"/>
</dbReference>
<dbReference type="IntAct" id="Q9CQY9">
    <property type="interactions" value="1"/>
</dbReference>
<dbReference type="STRING" id="10090.ENSMUSP00000038463"/>
<dbReference type="PhosphoSitePlus" id="Q9CQY9"/>
<dbReference type="PaxDb" id="10090-ENSMUSP00000038463"/>
<dbReference type="ProteomicsDB" id="287468"/>
<dbReference type="TopDownProteomics" id="Q9CQY9"/>
<dbReference type="Antibodypedia" id="49615">
    <property type="antibodies" value="51 antibodies from 20 providers"/>
</dbReference>
<dbReference type="DNASU" id="66377"/>
<dbReference type="Ensembl" id="ENSMUST00000038108.12">
    <property type="protein sequence ID" value="ENSMUSP00000038463.7"/>
    <property type="gene ID" value="ENSMUSG00000037152.12"/>
</dbReference>
<dbReference type="Ensembl" id="ENSMUST00000193279.2">
    <property type="protein sequence ID" value="ENSMUSP00000141933.2"/>
    <property type="gene ID" value="ENSMUSG00000037152.12"/>
</dbReference>
<dbReference type="GeneID" id="66377"/>
<dbReference type="KEGG" id="mmu:66377"/>
<dbReference type="UCSC" id="uc008pdy.1">
    <property type="organism name" value="mouse"/>
</dbReference>
<dbReference type="AGR" id="MGI:1913627"/>
<dbReference type="CTD" id="4717"/>
<dbReference type="MGI" id="MGI:1913627">
    <property type="gene designation" value="Ndufc1"/>
</dbReference>
<dbReference type="VEuPathDB" id="HostDB:ENSMUSG00000037152"/>
<dbReference type="eggNOG" id="ENOG502SFTF">
    <property type="taxonomic scope" value="Eukaryota"/>
</dbReference>
<dbReference type="GeneTree" id="ENSGT00390000002565"/>
<dbReference type="HOGENOM" id="CLU_199185_0_0_1"/>
<dbReference type="InParanoid" id="Q9CQY9"/>
<dbReference type="OMA" id="SAFIWGL"/>
<dbReference type="OrthoDB" id="9900059at2759"/>
<dbReference type="PhylomeDB" id="Q9CQY9"/>
<dbReference type="TreeFam" id="TF338333"/>
<dbReference type="Reactome" id="R-MMU-611105">
    <property type="pathway name" value="Respiratory electron transport"/>
</dbReference>
<dbReference type="Reactome" id="R-MMU-6799198">
    <property type="pathway name" value="Complex I biogenesis"/>
</dbReference>
<dbReference type="BioGRID-ORCS" id="66377">
    <property type="hits" value="7 hits in 77 CRISPR screens"/>
</dbReference>
<dbReference type="ChiTaRS" id="Ndufc1">
    <property type="organism name" value="mouse"/>
</dbReference>
<dbReference type="PRO" id="PR:Q9CQY9"/>
<dbReference type="Proteomes" id="UP000000589">
    <property type="component" value="Chromosome 3"/>
</dbReference>
<dbReference type="RNAct" id="Q9CQY9">
    <property type="molecule type" value="protein"/>
</dbReference>
<dbReference type="Bgee" id="ENSMUSG00000037152">
    <property type="expression patterns" value="Expressed in hindlimb stylopod muscle and 249 other cell types or tissues"/>
</dbReference>
<dbReference type="GO" id="GO:0005743">
    <property type="term" value="C:mitochondrial inner membrane"/>
    <property type="evidence" value="ECO:0000314"/>
    <property type="project" value="UniProtKB"/>
</dbReference>
<dbReference type="GO" id="GO:0005739">
    <property type="term" value="C:mitochondrion"/>
    <property type="evidence" value="ECO:0007005"/>
    <property type="project" value="MGI"/>
</dbReference>
<dbReference type="GO" id="GO:0045271">
    <property type="term" value="C:respiratory chain complex I"/>
    <property type="evidence" value="ECO:0000314"/>
    <property type="project" value="UniProtKB"/>
</dbReference>
<dbReference type="GO" id="GO:0009060">
    <property type="term" value="P:aerobic respiration"/>
    <property type="evidence" value="ECO:0000303"/>
    <property type="project" value="ComplexPortal"/>
</dbReference>
<dbReference type="GO" id="GO:0042776">
    <property type="term" value="P:proton motive force-driven mitochondrial ATP synthesis"/>
    <property type="evidence" value="ECO:0000303"/>
    <property type="project" value="ComplexPortal"/>
</dbReference>
<dbReference type="InterPro" id="IPR026192">
    <property type="entry name" value="NDUFC1"/>
</dbReference>
<dbReference type="PANTHER" id="PTHR17097:SF0">
    <property type="entry name" value="NADH DEHYDROGENASE [UBIQUINONE] 1 SUBUNIT C1, MITOCHONDRIAL"/>
    <property type="match status" value="1"/>
</dbReference>
<dbReference type="PANTHER" id="PTHR17097">
    <property type="entry name" value="NADH-UBIQUINONE OXIDOREDUCTASE KFYI SUBUNIT"/>
    <property type="match status" value="1"/>
</dbReference>
<dbReference type="Pfam" id="PF15088">
    <property type="entry name" value="NADH_dh_m_C1"/>
    <property type="match status" value="1"/>
</dbReference>
<organism>
    <name type="scientific">Mus musculus</name>
    <name type="common">Mouse</name>
    <dbReference type="NCBI Taxonomy" id="10090"/>
    <lineage>
        <taxon>Eukaryota</taxon>
        <taxon>Metazoa</taxon>
        <taxon>Chordata</taxon>
        <taxon>Craniata</taxon>
        <taxon>Vertebrata</taxon>
        <taxon>Euteleostomi</taxon>
        <taxon>Mammalia</taxon>
        <taxon>Eutheria</taxon>
        <taxon>Euarchontoglires</taxon>
        <taxon>Glires</taxon>
        <taxon>Rodentia</taxon>
        <taxon>Myomorpha</taxon>
        <taxon>Muroidea</taxon>
        <taxon>Muridae</taxon>
        <taxon>Murinae</taxon>
        <taxon>Mus</taxon>
        <taxon>Mus</taxon>
    </lineage>
</organism>
<evidence type="ECO:0000250" key="1"/>
<evidence type="ECO:0000255" key="2"/>
<evidence type="ECO:0000269" key="3">
    <source>
    </source>
</evidence>
<evidence type="ECO:0000305" key="4"/>
<evidence type="ECO:0007744" key="5">
    <source>
        <dbReference type="PDB" id="8PW5"/>
    </source>
</evidence>
<evidence type="ECO:0007829" key="6">
    <source>
        <dbReference type="PDB" id="6ZTQ"/>
    </source>
</evidence>
<evidence type="ECO:0007829" key="7">
    <source>
        <dbReference type="PDB" id="8OM1"/>
    </source>
</evidence>
<evidence type="ECO:0007829" key="8">
    <source>
        <dbReference type="PDB" id="8RGR"/>
    </source>
</evidence>